<sequence>MNKLALYCRIGFEKEVAAEITDTAAERGVFGFARIQENAGYVIFECYQPGEADRLAREIPFTQLIFARQLVVVSDLLQNLPTTDRITPILQKYQEVSPHLKLQQSSELWVETADTNEAKELSAFCRKFTVPLRQALKKQGWLNFKQIKDSGMTLHCLFVRSDACYAGYSYNRNHSPYFMGIPRLKFPTEAPSRSTLKLEEAILTFIPREEESKRLNENMIGVDLGACPGGWTYQLVKRGLFVYAVDHGKMAASLHETGRIEHCSEDGFKFQPPKRKKADWLVCDMVEQPGRIVALIGKWLSNEWCHETIFNLKLPMKKRYTEVRRCLQKLADELTQSGLKFRMQAKHLYHDREEITVHVRTWRH</sequence>
<feature type="chain" id="PRO_1000073560" description="Ribosomal RNA large subunit methyltransferase M">
    <location>
        <begin position="1"/>
        <end position="364"/>
    </location>
</feature>
<feature type="active site" description="Proton acceptor" evidence="1">
    <location>
        <position position="313"/>
    </location>
</feature>
<feature type="binding site" evidence="1">
    <location>
        <position position="194"/>
    </location>
    <ligand>
        <name>S-adenosyl-L-methionine</name>
        <dbReference type="ChEBI" id="CHEBI:59789"/>
    </ligand>
</feature>
<feature type="binding site" evidence="1">
    <location>
        <begin position="227"/>
        <end position="230"/>
    </location>
    <ligand>
        <name>S-adenosyl-L-methionine</name>
        <dbReference type="ChEBI" id="CHEBI:59789"/>
    </ligand>
</feature>
<feature type="binding site" evidence="1">
    <location>
        <position position="246"/>
    </location>
    <ligand>
        <name>S-adenosyl-L-methionine</name>
        <dbReference type="ChEBI" id="CHEBI:59789"/>
    </ligand>
</feature>
<feature type="binding site" evidence="1">
    <location>
        <position position="266"/>
    </location>
    <ligand>
        <name>S-adenosyl-L-methionine</name>
        <dbReference type="ChEBI" id="CHEBI:59789"/>
    </ligand>
</feature>
<feature type="binding site" evidence="1">
    <location>
        <position position="284"/>
    </location>
    <ligand>
        <name>S-adenosyl-L-methionine</name>
        <dbReference type="ChEBI" id="CHEBI:59789"/>
    </ligand>
</feature>
<dbReference type="EC" id="2.1.1.186" evidence="1"/>
<dbReference type="EMBL" id="CP000746">
    <property type="protein sequence ID" value="ABR75048.1"/>
    <property type="molecule type" value="Genomic_DNA"/>
</dbReference>
<dbReference type="RefSeq" id="WP_012073425.1">
    <property type="nucleotide sequence ID" value="NC_009655.1"/>
</dbReference>
<dbReference type="SMR" id="A6VQ01"/>
<dbReference type="STRING" id="339671.Asuc_1696"/>
<dbReference type="KEGG" id="asu:Asuc_1696"/>
<dbReference type="eggNOG" id="COG2933">
    <property type="taxonomic scope" value="Bacteria"/>
</dbReference>
<dbReference type="HOGENOM" id="CLU_043780_0_0_6"/>
<dbReference type="OrthoDB" id="154490at2"/>
<dbReference type="Proteomes" id="UP000001114">
    <property type="component" value="Chromosome"/>
</dbReference>
<dbReference type="GO" id="GO:0005737">
    <property type="term" value="C:cytoplasm"/>
    <property type="evidence" value="ECO:0007669"/>
    <property type="project" value="UniProtKB-SubCell"/>
</dbReference>
<dbReference type="GO" id="GO:0008757">
    <property type="term" value="F:S-adenosylmethionine-dependent methyltransferase activity"/>
    <property type="evidence" value="ECO:0007669"/>
    <property type="project" value="UniProtKB-UniRule"/>
</dbReference>
<dbReference type="GO" id="GO:0032259">
    <property type="term" value="P:methylation"/>
    <property type="evidence" value="ECO:0007669"/>
    <property type="project" value="UniProtKB-KW"/>
</dbReference>
<dbReference type="GO" id="GO:0006364">
    <property type="term" value="P:rRNA processing"/>
    <property type="evidence" value="ECO:0007669"/>
    <property type="project" value="UniProtKB-UniRule"/>
</dbReference>
<dbReference type="Gene3D" id="3.30.2300.20">
    <property type="match status" value="1"/>
</dbReference>
<dbReference type="Gene3D" id="3.30.70.2810">
    <property type="match status" value="1"/>
</dbReference>
<dbReference type="Gene3D" id="3.40.50.150">
    <property type="entry name" value="Vaccinia Virus protein VP39"/>
    <property type="match status" value="1"/>
</dbReference>
<dbReference type="HAMAP" id="MF_01551">
    <property type="entry name" value="23SrRNA_methyltr_M"/>
    <property type="match status" value="1"/>
</dbReference>
<dbReference type="InterPro" id="IPR040739">
    <property type="entry name" value="RlmM_FDX"/>
</dbReference>
<dbReference type="InterPro" id="IPR048646">
    <property type="entry name" value="RlmM_THUMP-like"/>
</dbReference>
<dbReference type="InterPro" id="IPR002877">
    <property type="entry name" value="RNA_MeTrfase_FtsJ_dom"/>
</dbReference>
<dbReference type="InterPro" id="IPR011224">
    <property type="entry name" value="rRNA_MeTrfase_M"/>
</dbReference>
<dbReference type="InterPro" id="IPR029063">
    <property type="entry name" value="SAM-dependent_MTases_sf"/>
</dbReference>
<dbReference type="NCBIfam" id="NF008734">
    <property type="entry name" value="PRK11760.1"/>
    <property type="match status" value="1"/>
</dbReference>
<dbReference type="PANTHER" id="PTHR37524">
    <property type="entry name" value="RIBOSOMAL RNA LARGE SUBUNIT METHYLTRANSFERASE M"/>
    <property type="match status" value="1"/>
</dbReference>
<dbReference type="PANTHER" id="PTHR37524:SF2">
    <property type="entry name" value="RIBOSOMAL RNA METHYLTRANSFERASE FTSJ DOMAIN-CONTAINING PROTEIN"/>
    <property type="match status" value="1"/>
</dbReference>
<dbReference type="Pfam" id="PF01728">
    <property type="entry name" value="FtsJ"/>
    <property type="match status" value="1"/>
</dbReference>
<dbReference type="Pfam" id="PF18125">
    <property type="entry name" value="RlmM_FDX"/>
    <property type="match status" value="1"/>
</dbReference>
<dbReference type="Pfam" id="PF21239">
    <property type="entry name" value="RLMM_N"/>
    <property type="match status" value="1"/>
</dbReference>
<dbReference type="PIRSF" id="PIRSF028774">
    <property type="entry name" value="UCP028774"/>
    <property type="match status" value="1"/>
</dbReference>
<dbReference type="SUPFAM" id="SSF53335">
    <property type="entry name" value="S-adenosyl-L-methionine-dependent methyltransferases"/>
    <property type="match status" value="1"/>
</dbReference>
<keyword id="KW-0963">Cytoplasm</keyword>
<keyword id="KW-0489">Methyltransferase</keyword>
<keyword id="KW-1185">Reference proteome</keyword>
<keyword id="KW-0698">rRNA processing</keyword>
<keyword id="KW-0949">S-adenosyl-L-methionine</keyword>
<keyword id="KW-0808">Transferase</keyword>
<evidence type="ECO:0000255" key="1">
    <source>
        <dbReference type="HAMAP-Rule" id="MF_01551"/>
    </source>
</evidence>
<reference key="1">
    <citation type="journal article" date="2010" name="BMC Genomics">
        <title>A genomic perspective on the potential of Actinobacillus succinogenes for industrial succinate production.</title>
        <authorList>
            <person name="McKinlay J.B."/>
            <person name="Laivenieks M."/>
            <person name="Schindler B.D."/>
            <person name="McKinlay A.A."/>
            <person name="Siddaramappa S."/>
            <person name="Challacombe J.F."/>
            <person name="Lowry S.R."/>
            <person name="Clum A."/>
            <person name="Lapidus A.L."/>
            <person name="Burkhart K.B."/>
            <person name="Harkins V."/>
            <person name="Vieille C."/>
        </authorList>
    </citation>
    <scope>NUCLEOTIDE SEQUENCE [LARGE SCALE GENOMIC DNA]</scope>
    <source>
        <strain>ATCC 55618 / DSM 22257 / CCUG 43843 / 130Z</strain>
    </source>
</reference>
<proteinExistence type="inferred from homology"/>
<organism>
    <name type="scientific">Actinobacillus succinogenes (strain ATCC 55618 / DSM 22257 / CCUG 43843 / 130Z)</name>
    <dbReference type="NCBI Taxonomy" id="339671"/>
    <lineage>
        <taxon>Bacteria</taxon>
        <taxon>Pseudomonadati</taxon>
        <taxon>Pseudomonadota</taxon>
        <taxon>Gammaproteobacteria</taxon>
        <taxon>Pasteurellales</taxon>
        <taxon>Pasteurellaceae</taxon>
        <taxon>Actinobacillus</taxon>
    </lineage>
</organism>
<name>RLMM_ACTSZ</name>
<comment type="function">
    <text evidence="1">Catalyzes the 2'-O-methylation at nucleotide C2498 in 23S rRNA.</text>
</comment>
<comment type="catalytic activity">
    <reaction evidence="1">
        <text>cytidine(2498) in 23S rRNA + S-adenosyl-L-methionine = 2'-O-methylcytidine(2498) in 23S rRNA + S-adenosyl-L-homocysteine + H(+)</text>
        <dbReference type="Rhea" id="RHEA:42788"/>
        <dbReference type="Rhea" id="RHEA-COMP:10244"/>
        <dbReference type="Rhea" id="RHEA-COMP:10245"/>
        <dbReference type="ChEBI" id="CHEBI:15378"/>
        <dbReference type="ChEBI" id="CHEBI:57856"/>
        <dbReference type="ChEBI" id="CHEBI:59789"/>
        <dbReference type="ChEBI" id="CHEBI:74495"/>
        <dbReference type="ChEBI" id="CHEBI:82748"/>
        <dbReference type="EC" id="2.1.1.186"/>
    </reaction>
</comment>
<comment type="subunit">
    <text evidence="1">Monomer.</text>
</comment>
<comment type="subcellular location">
    <subcellularLocation>
        <location evidence="1">Cytoplasm</location>
    </subcellularLocation>
</comment>
<comment type="similarity">
    <text evidence="1">Belongs to the class I-like SAM-binding methyltransferase superfamily. RNA methyltransferase RlmE family. RlmM subfamily.</text>
</comment>
<protein>
    <recommendedName>
        <fullName evidence="1">Ribosomal RNA large subunit methyltransferase M</fullName>
        <ecNumber evidence="1">2.1.1.186</ecNumber>
    </recommendedName>
    <alternativeName>
        <fullName evidence="1">23S rRNA (cytidine2498-2'-O)-methyltransferase</fullName>
    </alternativeName>
    <alternativeName>
        <fullName evidence="1">23S rRNA 2'-O-ribose methyltransferase RlmM</fullName>
    </alternativeName>
</protein>
<accession>A6VQ01</accession>
<gene>
    <name evidence="1" type="primary">rlmM</name>
    <name type="ordered locus">Asuc_1696</name>
</gene>